<reference key="1">
    <citation type="journal article" date="2002" name="Proc. Natl. Acad. Sci. U.S.A.">
        <title>Extensive mosaic structure revealed by the complete genome sequence of uropathogenic Escherichia coli.</title>
        <authorList>
            <person name="Welch R.A."/>
            <person name="Burland V."/>
            <person name="Plunkett G. III"/>
            <person name="Redford P."/>
            <person name="Roesch P."/>
            <person name="Rasko D."/>
            <person name="Buckles E.L."/>
            <person name="Liou S.-R."/>
            <person name="Boutin A."/>
            <person name="Hackett J."/>
            <person name="Stroud D."/>
            <person name="Mayhew G.F."/>
            <person name="Rose D.J."/>
            <person name="Zhou S."/>
            <person name="Schwartz D.C."/>
            <person name="Perna N.T."/>
            <person name="Mobley H.L.T."/>
            <person name="Donnenberg M.S."/>
            <person name="Blattner F.R."/>
        </authorList>
    </citation>
    <scope>NUCLEOTIDE SEQUENCE [LARGE SCALE GENOMIC DNA]</scope>
    <source>
        <strain>CFT073 / ATCC 700928 / UPEC</strain>
    </source>
</reference>
<evidence type="ECO:0000250" key="1"/>
<evidence type="ECO:0000255" key="2">
    <source>
        <dbReference type="HAMAP-Rule" id="MF_01158"/>
    </source>
</evidence>
<evidence type="ECO:0000305" key="3"/>
<comment type="function">
    <text evidence="1">Mediates the interaction of DNA replication initiator protein DnaA with DNA polymerase subunit beta sliding clamp (dnaN). Stimulates hydrolysis of ATP-DnaA to ADP-DnaA, rendering DnaA inactive for reinitiation, a process called regulatory inhibition of DnaA or RIDA (By similarity).</text>
</comment>
<comment type="subunit">
    <text evidence="2">The active form seems to be an ADP-bound monomer. Forms the RIDA complex (regulatory inactivation of DnaA) of ATP-DnaA, ADP-Hda and the DNA-loaded beta sliding clamp (dnaN).</text>
</comment>
<comment type="similarity">
    <text evidence="2">Belongs to the DnaA family. HdA subfamily.</text>
</comment>
<comment type="sequence caution" evidence="3">
    <conflict type="erroneous initiation">
        <sequence resource="EMBL-CDS" id="AAN81463"/>
    </conflict>
</comment>
<gene>
    <name evidence="2" type="primary">hda</name>
    <name type="ordered locus">c3013</name>
</gene>
<dbReference type="EMBL" id="AE014075">
    <property type="protein sequence ID" value="AAN81463.1"/>
    <property type="status" value="ALT_INIT"/>
    <property type="molecule type" value="Genomic_DNA"/>
</dbReference>
<dbReference type="RefSeq" id="WP_001307333.1">
    <property type="nucleotide sequence ID" value="NZ_CP051263.1"/>
</dbReference>
<dbReference type="SMR" id="P69932"/>
<dbReference type="STRING" id="199310.c3013"/>
<dbReference type="KEGG" id="ecc:c3013"/>
<dbReference type="eggNOG" id="COG0593">
    <property type="taxonomic scope" value="Bacteria"/>
</dbReference>
<dbReference type="HOGENOM" id="CLU_072265_1_1_6"/>
<dbReference type="Proteomes" id="UP000001410">
    <property type="component" value="Chromosome"/>
</dbReference>
<dbReference type="GO" id="GO:0006270">
    <property type="term" value="P:DNA replication initiation"/>
    <property type="evidence" value="ECO:0007669"/>
    <property type="project" value="TreeGrafter"/>
</dbReference>
<dbReference type="GO" id="GO:0032297">
    <property type="term" value="P:negative regulation of DNA-templated DNA replication initiation"/>
    <property type="evidence" value="ECO:0007669"/>
    <property type="project" value="InterPro"/>
</dbReference>
<dbReference type="FunFam" id="1.10.8.60:FF:000024">
    <property type="entry name" value="DnaA regulatory inactivator Hda"/>
    <property type="match status" value="1"/>
</dbReference>
<dbReference type="FunFam" id="3.40.50.300:FF:000452">
    <property type="entry name" value="DnaA regulatory inactivator Hda"/>
    <property type="match status" value="1"/>
</dbReference>
<dbReference type="Gene3D" id="1.10.8.60">
    <property type="match status" value="1"/>
</dbReference>
<dbReference type="Gene3D" id="3.40.50.300">
    <property type="entry name" value="P-loop containing nucleotide triphosphate hydrolases"/>
    <property type="match status" value="1"/>
</dbReference>
<dbReference type="HAMAP" id="MF_01158">
    <property type="entry name" value="Hda"/>
    <property type="match status" value="1"/>
</dbReference>
<dbReference type="InterPro" id="IPR020591">
    <property type="entry name" value="Chromosome_initiator_DnaA-like"/>
</dbReference>
<dbReference type="InterPro" id="IPR013317">
    <property type="entry name" value="DnaA_dom"/>
</dbReference>
<dbReference type="InterPro" id="IPR017788">
    <property type="entry name" value="Hda"/>
</dbReference>
<dbReference type="InterPro" id="IPR022864">
    <property type="entry name" value="Hda_Enterobact"/>
</dbReference>
<dbReference type="InterPro" id="IPR055199">
    <property type="entry name" value="Hda_lid"/>
</dbReference>
<dbReference type="InterPro" id="IPR027417">
    <property type="entry name" value="P-loop_NTPase"/>
</dbReference>
<dbReference type="NCBIfam" id="TIGR03420">
    <property type="entry name" value="DnaA_homol_Hda"/>
    <property type="match status" value="1"/>
</dbReference>
<dbReference type="NCBIfam" id="NF005982">
    <property type="entry name" value="PRK08084.1"/>
    <property type="match status" value="1"/>
</dbReference>
<dbReference type="PANTHER" id="PTHR30050">
    <property type="entry name" value="CHROMOSOMAL REPLICATION INITIATOR PROTEIN DNAA"/>
    <property type="match status" value="1"/>
</dbReference>
<dbReference type="PANTHER" id="PTHR30050:SF5">
    <property type="entry name" value="DNAA REGULATORY INACTIVATOR HDA"/>
    <property type="match status" value="1"/>
</dbReference>
<dbReference type="Pfam" id="PF00308">
    <property type="entry name" value="Bac_DnaA"/>
    <property type="match status" value="1"/>
</dbReference>
<dbReference type="Pfam" id="PF22688">
    <property type="entry name" value="Hda_lid"/>
    <property type="match status" value="1"/>
</dbReference>
<dbReference type="PRINTS" id="PR00051">
    <property type="entry name" value="DNAA"/>
</dbReference>
<dbReference type="SUPFAM" id="SSF52540">
    <property type="entry name" value="P-loop containing nucleoside triphosphate hydrolases"/>
    <property type="match status" value="1"/>
</dbReference>
<keyword id="KW-0235">DNA replication</keyword>
<keyword id="KW-0236">DNA replication inhibitor</keyword>
<keyword id="KW-1185">Reference proteome</keyword>
<organism>
    <name type="scientific">Escherichia coli O6:H1 (strain CFT073 / ATCC 700928 / UPEC)</name>
    <dbReference type="NCBI Taxonomy" id="199310"/>
    <lineage>
        <taxon>Bacteria</taxon>
        <taxon>Pseudomonadati</taxon>
        <taxon>Pseudomonadota</taxon>
        <taxon>Gammaproteobacteria</taxon>
        <taxon>Enterobacterales</taxon>
        <taxon>Enterobacteriaceae</taxon>
        <taxon>Escherichia</taxon>
    </lineage>
</organism>
<proteinExistence type="inferred from homology"/>
<name>HDA_ECOL6</name>
<protein>
    <recommendedName>
        <fullName evidence="2">DnaA regulatory inactivator Hda</fullName>
    </recommendedName>
</protein>
<sequence length="233" mass="26633">MNTPAQLSLPLYLPDDETFASFWPGDNSSLLAALQNVLRQEHSGYIYLWAREGAGRSHLLHAACAELSQRGDAVGYVPLDKRTWFVPEVLDGMEHLSLVCIDNIECIAGDELWEMAIFDLYNRILESGKTRLLITGDRPPRQLNLGLPDLASRLDWGQIYKLQPLSDEDKLQALQLRARLRGFELPEDVGRFLLKRLDREMRTLFMTLDQLDRASITAQRKLTIPFVKEILKL</sequence>
<feature type="chain" id="PRO_0000114315" description="DnaA regulatory inactivator Hda">
    <location>
        <begin position="1"/>
        <end position="233"/>
    </location>
</feature>
<accession>P69932</accession>
<accession>P76570</accession>
<accession>P76979</accession>